<organism>
    <name type="scientific">Yarrowia lipolytica (strain CLIB 122 / E 150)</name>
    <name type="common">Yeast</name>
    <name type="synonym">Candida lipolytica</name>
    <dbReference type="NCBI Taxonomy" id="284591"/>
    <lineage>
        <taxon>Eukaryota</taxon>
        <taxon>Fungi</taxon>
        <taxon>Dikarya</taxon>
        <taxon>Ascomycota</taxon>
        <taxon>Saccharomycotina</taxon>
        <taxon>Dipodascomycetes</taxon>
        <taxon>Dipodascales</taxon>
        <taxon>Dipodascales incertae sedis</taxon>
        <taxon>Yarrowia</taxon>
    </lineage>
</organism>
<reference key="1">
    <citation type="journal article" date="2004" name="Nature">
        <title>Genome evolution in yeasts.</title>
        <authorList>
            <person name="Dujon B."/>
            <person name="Sherman D."/>
            <person name="Fischer G."/>
            <person name="Durrens P."/>
            <person name="Casaregola S."/>
            <person name="Lafontaine I."/>
            <person name="de Montigny J."/>
            <person name="Marck C."/>
            <person name="Neuveglise C."/>
            <person name="Talla E."/>
            <person name="Goffard N."/>
            <person name="Frangeul L."/>
            <person name="Aigle M."/>
            <person name="Anthouard V."/>
            <person name="Babour A."/>
            <person name="Barbe V."/>
            <person name="Barnay S."/>
            <person name="Blanchin S."/>
            <person name="Beckerich J.-M."/>
            <person name="Beyne E."/>
            <person name="Bleykasten C."/>
            <person name="Boisrame A."/>
            <person name="Boyer J."/>
            <person name="Cattolico L."/>
            <person name="Confanioleri F."/>
            <person name="de Daruvar A."/>
            <person name="Despons L."/>
            <person name="Fabre E."/>
            <person name="Fairhead C."/>
            <person name="Ferry-Dumazet H."/>
            <person name="Groppi A."/>
            <person name="Hantraye F."/>
            <person name="Hennequin C."/>
            <person name="Jauniaux N."/>
            <person name="Joyet P."/>
            <person name="Kachouri R."/>
            <person name="Kerrest A."/>
            <person name="Koszul R."/>
            <person name="Lemaire M."/>
            <person name="Lesur I."/>
            <person name="Ma L."/>
            <person name="Muller H."/>
            <person name="Nicaud J.-M."/>
            <person name="Nikolski M."/>
            <person name="Oztas S."/>
            <person name="Ozier-Kalogeropoulos O."/>
            <person name="Pellenz S."/>
            <person name="Potier S."/>
            <person name="Richard G.-F."/>
            <person name="Straub M.-L."/>
            <person name="Suleau A."/>
            <person name="Swennen D."/>
            <person name="Tekaia F."/>
            <person name="Wesolowski-Louvel M."/>
            <person name="Westhof E."/>
            <person name="Wirth B."/>
            <person name="Zeniou-Meyer M."/>
            <person name="Zivanovic Y."/>
            <person name="Bolotin-Fukuhara M."/>
            <person name="Thierry A."/>
            <person name="Bouchier C."/>
            <person name="Caudron B."/>
            <person name="Scarpelli C."/>
            <person name="Gaillardin C."/>
            <person name="Weissenbach J."/>
            <person name="Wincker P."/>
            <person name="Souciet J.-L."/>
        </authorList>
    </citation>
    <scope>NUCLEOTIDE SEQUENCE [LARGE SCALE GENOMIC DNA]</scope>
    <source>
        <strain>CLIB 122 / E 150</strain>
    </source>
</reference>
<comment type="function">
    <text evidence="2">IMP-specific 5'-nucleotidase involved in IMP (inositol monophosphate) degradation.</text>
</comment>
<comment type="catalytic activity">
    <reaction evidence="2">
        <text>IMP + H2O = inosine + phosphate</text>
        <dbReference type="Rhea" id="RHEA:27718"/>
        <dbReference type="ChEBI" id="CHEBI:15377"/>
        <dbReference type="ChEBI" id="CHEBI:17596"/>
        <dbReference type="ChEBI" id="CHEBI:43474"/>
        <dbReference type="ChEBI" id="CHEBI:58053"/>
        <dbReference type="EC" id="3.1.3.99"/>
    </reaction>
</comment>
<comment type="cofactor">
    <cofactor evidence="2">
        <name>Mg(2+)</name>
        <dbReference type="ChEBI" id="CHEBI:18420"/>
    </cofactor>
</comment>
<comment type="activity regulation">
    <text evidence="1 2">Allosterically activated by ATP (By similarity). ATP binding is a prerequisite to magnesium and substrate binding. ATP binds to 2 of the subunits in the homotetramer inducing a closure of these 2 subunits and the release of the C-terminal loop, thereby activating the enzyme (By similarity).</text>
</comment>
<comment type="subunit">
    <text evidence="2">Homotetramer.</text>
</comment>
<comment type="similarity">
    <text evidence="3">Belongs to the ISN1 family.</text>
</comment>
<proteinExistence type="inferred from homology"/>
<keyword id="KW-0067">ATP-binding</keyword>
<keyword id="KW-0378">Hydrolase</keyword>
<keyword id="KW-0460">Magnesium</keyword>
<keyword id="KW-0479">Metal-binding</keyword>
<keyword id="KW-0546">Nucleotide metabolism</keyword>
<keyword id="KW-0547">Nucleotide-binding</keyword>
<keyword id="KW-1185">Reference proteome</keyword>
<accession>Q6C673</accession>
<protein>
    <recommendedName>
        <fullName>IMP-specific 5'-nucleotidase 1</fullName>
        <ecNumber evidence="2">3.1.3.99</ecNumber>
    </recommendedName>
</protein>
<name>ISN1_YARLI</name>
<dbReference type="EC" id="3.1.3.99" evidence="2"/>
<dbReference type="EMBL" id="CR382131">
    <property type="protein sequence ID" value="CAG79432.1"/>
    <property type="molecule type" value="Genomic_DNA"/>
</dbReference>
<dbReference type="RefSeq" id="XP_503839.1">
    <property type="nucleotide sequence ID" value="XM_503839.1"/>
</dbReference>
<dbReference type="SMR" id="Q6C673"/>
<dbReference type="FunCoup" id="Q6C673">
    <property type="interactions" value="91"/>
</dbReference>
<dbReference type="STRING" id="284591.Q6C673"/>
<dbReference type="EnsemblFungi" id="CAG79432">
    <property type="protein sequence ID" value="CAG79432"/>
    <property type="gene ID" value="YALI0_E11913g"/>
</dbReference>
<dbReference type="KEGG" id="yli:2912803"/>
<dbReference type="VEuPathDB" id="FungiDB:YALI0_E11913g"/>
<dbReference type="HOGENOM" id="CLU_031816_1_0_1"/>
<dbReference type="InParanoid" id="Q6C673"/>
<dbReference type="OMA" id="WGVLACQ"/>
<dbReference type="OrthoDB" id="44138at4891"/>
<dbReference type="Proteomes" id="UP000001300">
    <property type="component" value="Chromosome E"/>
</dbReference>
<dbReference type="GO" id="GO:0005524">
    <property type="term" value="F:ATP binding"/>
    <property type="evidence" value="ECO:0007669"/>
    <property type="project" value="UniProtKB-KW"/>
</dbReference>
<dbReference type="GO" id="GO:0050483">
    <property type="term" value="F:IMP 5'-nucleotidase activity"/>
    <property type="evidence" value="ECO:0000318"/>
    <property type="project" value="GO_Central"/>
</dbReference>
<dbReference type="GO" id="GO:0000287">
    <property type="term" value="F:magnesium ion binding"/>
    <property type="evidence" value="ECO:0007669"/>
    <property type="project" value="InterPro"/>
</dbReference>
<dbReference type="GO" id="GO:0006190">
    <property type="term" value="P:inosine salvage"/>
    <property type="evidence" value="ECO:0000318"/>
    <property type="project" value="GO_Central"/>
</dbReference>
<dbReference type="GO" id="GO:0071590">
    <property type="term" value="P:nicotinamide riboside biosynthetic process"/>
    <property type="evidence" value="ECO:0000318"/>
    <property type="project" value="GO_Central"/>
</dbReference>
<dbReference type="GO" id="GO:0071592">
    <property type="term" value="P:nicotinic acid riboside biosynthetic process"/>
    <property type="evidence" value="ECO:0000318"/>
    <property type="project" value="GO_Central"/>
</dbReference>
<dbReference type="GO" id="GO:0009117">
    <property type="term" value="P:nucleotide metabolic process"/>
    <property type="evidence" value="ECO:0007669"/>
    <property type="project" value="UniProtKB-KW"/>
</dbReference>
<dbReference type="InterPro" id="IPR036412">
    <property type="entry name" value="HAD-like_sf"/>
</dbReference>
<dbReference type="InterPro" id="IPR009453">
    <property type="entry name" value="ISN1"/>
</dbReference>
<dbReference type="PANTHER" id="PTHR28213">
    <property type="entry name" value="IMP-SPECIFIC 5'-NUCLEOTIDASE 1"/>
    <property type="match status" value="1"/>
</dbReference>
<dbReference type="PANTHER" id="PTHR28213:SF1">
    <property type="entry name" value="IMP-SPECIFIC 5'-NUCLEOTIDASE 1"/>
    <property type="match status" value="1"/>
</dbReference>
<dbReference type="Pfam" id="PF06437">
    <property type="entry name" value="ISN1"/>
    <property type="match status" value="1"/>
</dbReference>
<dbReference type="PIRSF" id="PIRSF028836">
    <property type="entry name" value="ISN1"/>
    <property type="match status" value="1"/>
</dbReference>
<dbReference type="SUPFAM" id="SSF56784">
    <property type="entry name" value="HAD-like"/>
    <property type="match status" value="1"/>
</dbReference>
<evidence type="ECO:0000250" key="1">
    <source>
        <dbReference type="UniProtKB" id="A0A144A134"/>
    </source>
</evidence>
<evidence type="ECO:0000250" key="2">
    <source>
        <dbReference type="UniProtKB" id="Q99312"/>
    </source>
</evidence>
<evidence type="ECO:0000305" key="3"/>
<gene>
    <name type="primary">ISN1</name>
    <name type="ordered locus">YALI0E11913g</name>
</gene>
<sequence length="420" mass="47198">MTSRYRVEYSLKQHRRDEFIEWVKTLLATPFVLHAGSTGDGRPGDENRSVVETRRRYAEIFYDVEKLIENQLYHDNNDSGERARLRQLVPTIGQFFTKLPLERAFYTQDEIRSISHRRFVSPSFNDVRMILNTAQVMALATGRQPLKLVTFDGDVTLYADGGNIDPDSPIIPVLLGLLRNDVYVGIVTAAGYSEKDGSKYGVRLYGLLEAIVKTDTLTEQQKNHLLVMGGESNFLFKFIAAENRFEWIDPEEWTLPEVRTWSQEDITSVLNIGERVFTNALTKCSLPATIIRKVRGVGIVPLPGKKIMREQLEEMVLAAQKTLETSKATGNVQFCAFNGGSDVWVDIGDKDLGVRSLQAYLGNITGTQTLHVGDQFAALGANDFKARLAATTVWIANPSETVEIIAELIDYIEHERQCSA</sequence>
<feature type="chain" id="PRO_0000084256" description="IMP-specific 5'-nucleotidase 1">
    <location>
        <begin position="1"/>
        <end position="420"/>
    </location>
</feature>
<feature type="active site" description="Nucleophile" evidence="1">
    <location>
        <position position="152"/>
    </location>
</feature>
<feature type="active site" description="Proton donor" evidence="1">
    <location>
        <position position="154"/>
    </location>
</feature>
<feature type="binding site" evidence="1">
    <location>
        <position position="152"/>
    </location>
    <ligand>
        <name>IMP</name>
        <dbReference type="ChEBI" id="CHEBI:58053"/>
    </ligand>
</feature>
<feature type="binding site" evidence="1">
    <location>
        <position position="152"/>
    </location>
    <ligand>
        <name>Mg(2+)</name>
        <dbReference type="ChEBI" id="CHEBI:18420"/>
    </ligand>
</feature>
<feature type="binding site" evidence="1">
    <location>
        <position position="154"/>
    </location>
    <ligand>
        <name>IMP</name>
        <dbReference type="ChEBI" id="CHEBI:58053"/>
    </ligand>
</feature>
<feature type="binding site" evidence="1">
    <location>
        <position position="154"/>
    </location>
    <ligand>
        <name>Mg(2+)</name>
        <dbReference type="ChEBI" id="CHEBI:18420"/>
    </ligand>
</feature>
<feature type="binding site" evidence="1">
    <location>
        <position position="160"/>
    </location>
    <ligand>
        <name>IMP</name>
        <dbReference type="ChEBI" id="CHEBI:58053"/>
    </ligand>
</feature>
<feature type="binding site" evidence="1">
    <location>
        <position position="188"/>
    </location>
    <ligand>
        <name>IMP</name>
        <dbReference type="ChEBI" id="CHEBI:58053"/>
    </ligand>
</feature>
<feature type="binding site" evidence="1">
    <location>
        <position position="342"/>
    </location>
    <ligand>
        <name>IMP</name>
        <dbReference type="ChEBI" id="CHEBI:58053"/>
    </ligand>
</feature>
<feature type="binding site" evidence="1">
    <location>
        <position position="350"/>
    </location>
    <ligand>
        <name>IMP</name>
        <dbReference type="ChEBI" id="CHEBI:58053"/>
    </ligand>
</feature>
<feature type="binding site" evidence="1">
    <location>
        <position position="374"/>
    </location>
    <ligand>
        <name>Mg(2+)</name>
        <dbReference type="ChEBI" id="CHEBI:18420"/>
    </ligand>
</feature>